<name>GCY27_CAEEL</name>
<accession>Q9XU42</accession>
<accession>C1P657</accession>
<organism evidence="10">
    <name type="scientific">Caenorhabditis elegans</name>
    <dbReference type="NCBI Taxonomy" id="6239"/>
    <lineage>
        <taxon>Eukaryota</taxon>
        <taxon>Metazoa</taxon>
        <taxon>Ecdysozoa</taxon>
        <taxon>Nematoda</taxon>
        <taxon>Chromadorea</taxon>
        <taxon>Rhabditida</taxon>
        <taxon>Rhabditina</taxon>
        <taxon>Rhabditomorpha</taxon>
        <taxon>Rhabditoidea</taxon>
        <taxon>Rhabditidae</taxon>
        <taxon>Peloderinae</taxon>
        <taxon>Caenorhabditis</taxon>
    </lineage>
</organism>
<protein>
    <recommendedName>
        <fullName evidence="9">Receptor-type guanylate cyclase gcy-27</fullName>
        <ecNumber evidence="1">4.6.1.2</ecNumber>
    </recommendedName>
</protein>
<keyword id="KW-0025">Alternative splicing</keyword>
<keyword id="KW-1003">Cell membrane</keyword>
<keyword id="KW-0141">cGMP biosynthesis</keyword>
<keyword id="KW-0325">Glycoprotein</keyword>
<keyword id="KW-0342">GTP-binding</keyword>
<keyword id="KW-0456">Lyase</keyword>
<keyword id="KW-0472">Membrane</keyword>
<keyword id="KW-0547">Nucleotide-binding</keyword>
<keyword id="KW-1185">Reference proteome</keyword>
<keyword id="KW-0732">Signal</keyword>
<keyword id="KW-0812">Transmembrane</keyword>
<keyword id="KW-1133">Transmembrane helix</keyword>
<evidence type="ECO:0000250" key="1">
    <source>
        <dbReference type="UniProtKB" id="Q19187"/>
    </source>
</evidence>
<evidence type="ECO:0000255" key="2"/>
<evidence type="ECO:0000255" key="3">
    <source>
        <dbReference type="PROSITE-ProRule" id="PRU00099"/>
    </source>
</evidence>
<evidence type="ECO:0000255" key="4">
    <source>
        <dbReference type="PROSITE-ProRule" id="PRU00159"/>
    </source>
</evidence>
<evidence type="ECO:0000255" key="5">
    <source>
        <dbReference type="PROSITE-ProRule" id="PRU00498"/>
    </source>
</evidence>
<evidence type="ECO:0000269" key="6">
    <source>
    </source>
</evidence>
<evidence type="ECO:0000269" key="7">
    <source>
    </source>
</evidence>
<evidence type="ECO:0000269" key="8">
    <source>
    </source>
</evidence>
<evidence type="ECO:0000305" key="9"/>
<evidence type="ECO:0000312" key="10">
    <source>
        <dbReference type="Proteomes" id="UP000001940"/>
    </source>
</evidence>
<evidence type="ECO:0000312" key="11">
    <source>
        <dbReference type="WormBase" id="C06A12.4a"/>
    </source>
</evidence>
<evidence type="ECO:0000312" key="12">
    <source>
        <dbReference type="WormBase" id="C06A12.4b"/>
    </source>
</evidence>
<reference evidence="10" key="1">
    <citation type="journal article" date="1998" name="Science">
        <title>Genome sequence of the nematode C. elegans: a platform for investigating biology.</title>
        <authorList>
            <consortium name="The C. elegans sequencing consortium"/>
        </authorList>
    </citation>
    <scope>NUCLEOTIDE SEQUENCE [LARGE SCALE GENOMIC DNA]</scope>
    <source>
        <strain evidence="10">Bristol N2</strain>
    </source>
</reference>
<reference evidence="9" key="2">
    <citation type="journal article" date="2006" name="Genetics">
        <title>Searching for neuronal left/right asymmetry: genomewide analysis of nematode receptor-type guanylyl cyclases.</title>
        <authorList>
            <person name="Ortiz C.O."/>
            <person name="Etchberger J.F."/>
            <person name="Posy S.L."/>
            <person name="Frokjaer-Jensen C."/>
            <person name="Lockery S."/>
            <person name="Honig B."/>
            <person name="Hobert O."/>
        </authorList>
    </citation>
    <scope>TISSUE SPECIFICITY</scope>
</reference>
<reference evidence="9" key="3">
    <citation type="journal article" date="2013" name="PLoS Genet.">
        <title>The C. elegans cGMP-dependent protein kinase EGL-4 regulates nociceptive behavioral sensitivity.</title>
        <authorList>
            <person name="Krzyzanowski M.C."/>
            <person name="Brueggemann C."/>
            <person name="Ezak M.J."/>
            <person name="Wood J.F."/>
            <person name="Michaels K.L."/>
            <person name="Jackson C.A."/>
            <person name="Juang B.T."/>
            <person name="Collins K.D."/>
            <person name="Yu M.C."/>
            <person name="L'etoile N.D."/>
            <person name="Ferkey D.M."/>
        </authorList>
    </citation>
    <scope>FUNCTION</scope>
</reference>
<reference key="4">
    <citation type="journal article" date="2018" name="Elife">
        <title>Thioredoxin shapes the C. elegans sensory response to Pseudomonas produced nitric oxide.</title>
        <authorList>
            <person name="Hao Y."/>
            <person name="Yang W."/>
            <person name="Ren J."/>
            <person name="Hall Q."/>
            <person name="Zhang Y."/>
            <person name="Kaplan J.M."/>
        </authorList>
    </citation>
    <scope>FUNCTION</scope>
</reference>
<proteinExistence type="evidence at transcript level"/>
<comment type="function">
    <text evidence="1 7 8">Guanylate cyclase involved in the production of the second messenger cGMP (By similarity). May be involved in sensitivity to quinine by regulating egl-4 activity through the production of cGMP (PubMed:23874221). Promotes the calcium flux to the cytoplasm in ASJ sensory neurons upon removal of a nitric oxide (NO) stimulus and is thereby involved in the behavioral avoidance response to NO-producing organisms like P.aeruginosa (PubMed:30014846).</text>
</comment>
<comment type="catalytic activity">
    <reaction evidence="1">
        <text>GTP = 3',5'-cyclic GMP + diphosphate</text>
        <dbReference type="Rhea" id="RHEA:13665"/>
        <dbReference type="ChEBI" id="CHEBI:33019"/>
        <dbReference type="ChEBI" id="CHEBI:37565"/>
        <dbReference type="ChEBI" id="CHEBI:57746"/>
        <dbReference type="EC" id="4.6.1.2"/>
    </reaction>
</comment>
<comment type="subcellular location">
    <subcellularLocation>
        <location evidence="9">Cell membrane</location>
        <topology evidence="9">Single-pass type I membrane protein</topology>
    </subcellularLocation>
</comment>
<comment type="alternative products">
    <event type="alternative splicing"/>
    <isoform>
        <id>Q9XU42-1</id>
        <name evidence="11">a</name>
        <sequence type="displayed"/>
    </isoform>
    <isoform>
        <id>Q9XU42-2</id>
        <name evidence="12">b</name>
        <sequence type="described" ref="VSP_057709"/>
    </isoform>
</comment>
<comment type="tissue specificity">
    <text evidence="6">Expressed bilaterally in ASK, ASI and ASJ sensory neurons.</text>
</comment>
<comment type="domain">
    <text evidence="4">The protein kinase domain is predicted to be catalytically inactive.</text>
</comment>
<comment type="similarity">
    <text evidence="3">Belongs to the adenylyl cyclase class-4/guanylyl cyclase family.</text>
</comment>
<feature type="signal peptide" evidence="9">
    <location>
        <begin position="1"/>
        <end status="unknown"/>
    </location>
</feature>
<feature type="chain" id="PRO_0000433294" description="Receptor-type guanylate cyclase gcy-27" evidence="9">
    <location>
        <begin status="unknown"/>
        <end position="735"/>
    </location>
</feature>
<feature type="transmembrane region" description="Helical" evidence="2">
    <location>
        <begin position="28"/>
        <end position="48"/>
    </location>
</feature>
<feature type="domain" description="Protein kinase" evidence="4">
    <location>
        <begin position="188"/>
        <end position="465"/>
    </location>
</feature>
<feature type="domain" description="Guanylate cyclase" evidence="3">
    <location>
        <begin position="538"/>
        <end position="668"/>
    </location>
</feature>
<feature type="glycosylation site" description="N-linked (GlcNAc...) asparagine" evidence="5">
    <location>
        <position position="11"/>
    </location>
</feature>
<feature type="splice variant" id="VSP_057709" description="In isoform b.">
    <original>RVFGSYALIGTQRAEFIQ</original>
    <variation>R</variation>
    <location>
        <begin position="194"/>
        <end position="211"/>
    </location>
</feature>
<dbReference type="EC" id="4.6.1.2" evidence="1"/>
<dbReference type="EMBL" id="BX284604">
    <property type="protein sequence ID" value="CAB06040.4"/>
    <property type="molecule type" value="Genomic_DNA"/>
</dbReference>
<dbReference type="EMBL" id="BX284604">
    <property type="protein sequence ID" value="CAX65048.1"/>
    <property type="molecule type" value="Genomic_DNA"/>
</dbReference>
<dbReference type="RefSeq" id="NP_001255956.2">
    <property type="nucleotide sequence ID" value="NM_001269027.2"/>
</dbReference>
<dbReference type="RefSeq" id="NP_001255957.2">
    <property type="nucleotide sequence ID" value="NM_001269028.2"/>
</dbReference>
<dbReference type="SMR" id="Q9XU42"/>
<dbReference type="FunCoup" id="Q9XU42">
    <property type="interactions" value="116"/>
</dbReference>
<dbReference type="STRING" id="6239.C06A12.4a.1"/>
<dbReference type="GlyCosmos" id="Q9XU42">
    <property type="glycosylation" value="1 site, No reported glycans"/>
</dbReference>
<dbReference type="PaxDb" id="6239-C06A12.4a"/>
<dbReference type="EnsemblMetazoa" id="C06A12.4a.1">
    <property type="protein sequence ID" value="C06A12.4a.1"/>
    <property type="gene ID" value="WBGene00001550"/>
</dbReference>
<dbReference type="EnsemblMetazoa" id="C06A12.4b.1">
    <property type="protein sequence ID" value="C06A12.4b.1"/>
    <property type="gene ID" value="WBGene00001550"/>
</dbReference>
<dbReference type="GeneID" id="191654"/>
<dbReference type="KEGG" id="cel:CELE_C06A12.4"/>
<dbReference type="UCSC" id="C06A12.4">
    <molecule id="Q9XU42-1"/>
    <property type="organism name" value="c. elegans"/>
</dbReference>
<dbReference type="AGR" id="WB:WBGene00001550"/>
<dbReference type="CTD" id="191654"/>
<dbReference type="WormBase" id="C06A12.4a">
    <property type="protein sequence ID" value="CE50575"/>
    <property type="gene ID" value="WBGene00001550"/>
    <property type="gene designation" value="gcy-27"/>
</dbReference>
<dbReference type="WormBase" id="C06A12.4b">
    <property type="protein sequence ID" value="CE50588"/>
    <property type="gene ID" value="WBGene00001550"/>
    <property type="gene designation" value="gcy-27"/>
</dbReference>
<dbReference type="eggNOG" id="KOG1023">
    <property type="taxonomic scope" value="Eukaryota"/>
</dbReference>
<dbReference type="GeneTree" id="ENSGT00970000196639"/>
<dbReference type="HOGENOM" id="CLU_001072_11_1_1"/>
<dbReference type="InParanoid" id="Q9XU42"/>
<dbReference type="OrthoDB" id="60033at2759"/>
<dbReference type="PhylomeDB" id="Q9XU42"/>
<dbReference type="Reactome" id="R-CEL-2514859">
    <property type="pathway name" value="Inactivation, recovery and regulation of the phototransduction cascade"/>
</dbReference>
<dbReference type="PRO" id="PR:Q9XU42"/>
<dbReference type="Proteomes" id="UP000001940">
    <property type="component" value="Chromosome IV"/>
</dbReference>
<dbReference type="Bgee" id="WBGene00001550">
    <property type="expression patterns" value="Expressed in larva"/>
</dbReference>
<dbReference type="GO" id="GO:0005886">
    <property type="term" value="C:plasma membrane"/>
    <property type="evidence" value="ECO:0000318"/>
    <property type="project" value="GO_Central"/>
</dbReference>
<dbReference type="GO" id="GO:0005524">
    <property type="term" value="F:ATP binding"/>
    <property type="evidence" value="ECO:0007669"/>
    <property type="project" value="InterPro"/>
</dbReference>
<dbReference type="GO" id="GO:0005525">
    <property type="term" value="F:GTP binding"/>
    <property type="evidence" value="ECO:0007669"/>
    <property type="project" value="UniProtKB-KW"/>
</dbReference>
<dbReference type="GO" id="GO:0004383">
    <property type="term" value="F:guanylate cyclase activity"/>
    <property type="evidence" value="ECO:0000318"/>
    <property type="project" value="GO_Central"/>
</dbReference>
<dbReference type="GO" id="GO:0001653">
    <property type="term" value="F:peptide receptor activity"/>
    <property type="evidence" value="ECO:0000318"/>
    <property type="project" value="GO_Central"/>
</dbReference>
<dbReference type="GO" id="GO:0004672">
    <property type="term" value="F:protein kinase activity"/>
    <property type="evidence" value="ECO:0007669"/>
    <property type="project" value="InterPro"/>
</dbReference>
<dbReference type="GO" id="GO:0006182">
    <property type="term" value="P:cGMP biosynthetic process"/>
    <property type="evidence" value="ECO:0000318"/>
    <property type="project" value="GO_Central"/>
</dbReference>
<dbReference type="GO" id="GO:0007635">
    <property type="term" value="P:chemosensory behavior"/>
    <property type="evidence" value="ECO:0000315"/>
    <property type="project" value="UniProtKB"/>
</dbReference>
<dbReference type="GO" id="GO:0035556">
    <property type="term" value="P:intracellular signal transduction"/>
    <property type="evidence" value="ECO:0007669"/>
    <property type="project" value="InterPro"/>
</dbReference>
<dbReference type="GO" id="GO:0007168">
    <property type="term" value="P:receptor guanylyl cyclase signaling pathway"/>
    <property type="evidence" value="ECO:0000318"/>
    <property type="project" value="GO_Central"/>
</dbReference>
<dbReference type="GO" id="GO:0050913">
    <property type="term" value="P:sensory perception of bitter taste"/>
    <property type="evidence" value="ECO:0000315"/>
    <property type="project" value="UniProtKB"/>
</dbReference>
<dbReference type="CDD" id="cd07302">
    <property type="entry name" value="CHD"/>
    <property type="match status" value="1"/>
</dbReference>
<dbReference type="FunFam" id="1.10.510.10:FF:001285">
    <property type="entry name" value="Guanylate cyclase"/>
    <property type="match status" value="1"/>
</dbReference>
<dbReference type="FunFam" id="3.30.70.1230:FF:000050">
    <property type="entry name" value="Guanylate cyclase"/>
    <property type="match status" value="1"/>
</dbReference>
<dbReference type="Gene3D" id="3.30.70.1230">
    <property type="entry name" value="Nucleotide cyclase"/>
    <property type="match status" value="1"/>
</dbReference>
<dbReference type="Gene3D" id="1.10.510.10">
    <property type="entry name" value="Transferase(Phosphotransferase) domain 1"/>
    <property type="match status" value="1"/>
</dbReference>
<dbReference type="InterPro" id="IPR001054">
    <property type="entry name" value="A/G_cyclase"/>
</dbReference>
<dbReference type="InterPro" id="IPR050401">
    <property type="entry name" value="Cyclic_nucleotide_synthase"/>
</dbReference>
<dbReference type="InterPro" id="IPR011009">
    <property type="entry name" value="Kinase-like_dom_sf"/>
</dbReference>
<dbReference type="InterPro" id="IPR029787">
    <property type="entry name" value="Nucleotide_cyclase"/>
</dbReference>
<dbReference type="InterPro" id="IPR000719">
    <property type="entry name" value="Prot_kinase_dom"/>
</dbReference>
<dbReference type="InterPro" id="IPR001245">
    <property type="entry name" value="Ser-Thr/Tyr_kinase_cat_dom"/>
</dbReference>
<dbReference type="PANTHER" id="PTHR11920">
    <property type="entry name" value="GUANYLYL CYCLASE"/>
    <property type="match status" value="1"/>
</dbReference>
<dbReference type="PANTHER" id="PTHR11920:SF355">
    <property type="entry name" value="RECEPTOR-TYPE GUANYLATE CYCLASE GCY-10-RELATED"/>
    <property type="match status" value="1"/>
</dbReference>
<dbReference type="Pfam" id="PF00211">
    <property type="entry name" value="Guanylate_cyc"/>
    <property type="match status" value="1"/>
</dbReference>
<dbReference type="Pfam" id="PF07714">
    <property type="entry name" value="PK_Tyr_Ser-Thr"/>
    <property type="match status" value="1"/>
</dbReference>
<dbReference type="SMART" id="SM00044">
    <property type="entry name" value="CYCc"/>
    <property type="match status" value="1"/>
</dbReference>
<dbReference type="SMART" id="SM00220">
    <property type="entry name" value="S_TKc"/>
    <property type="match status" value="1"/>
</dbReference>
<dbReference type="SUPFAM" id="SSF55073">
    <property type="entry name" value="Nucleotide cyclase"/>
    <property type="match status" value="1"/>
</dbReference>
<dbReference type="SUPFAM" id="SSF56112">
    <property type="entry name" value="Protein kinase-like (PK-like)"/>
    <property type="match status" value="1"/>
</dbReference>
<dbReference type="PROSITE" id="PS50125">
    <property type="entry name" value="GUANYLATE_CYCLASE_2"/>
    <property type="match status" value="1"/>
</dbReference>
<dbReference type="PROSITE" id="PS50011">
    <property type="entry name" value="PROTEIN_KINASE_DOM"/>
    <property type="match status" value="1"/>
</dbReference>
<sequence length="735" mass="84858">MIDGEAYFEKNSTGKLGSWGWRDVNLQFIICTLPVPIYFVVVAIWTINGASNSYRFPFLQTYMILTDRFWLFFRCFTIVAWCGWCSNYIFFPCLMNAILYIISLSLSRDTTFILFIFYQMNKLITVIRDFSYSVYNWCYETVIGENTRKYKMTWKVPKESLKIIVNKNADARMQRELENRTAKDEANALTSRRRVFGSYALIGTQRAEFIQFRQIKHIDITNASLDFLYNLKQLKHDNLANFYGIQLNDDLNTMTILHALVERGTLEEFCLDRDFGMDETFKSAFMRDILKGLQYLHLSPVAYHGHLHAATCLIDINWVLKIALYGVTNFVCDNFDAENITMPDRSDYTISYAQYVCFPPEHIREYDATGKLPTRFVRGSKQGDIYCVGMIFYMMIEREDPYRLIHSVERPGSGLMMEILDHNLMPFISNNETQEDTLLDKCKECWNRDPEKRPTIENLRNAIAICYADSKGNLIDQMIRMNEKYADELETLVAARSADLALAQMQTMRLLNEMLPASIAKDLKNGVIAPARSYASATVMFVQICDFIVILKRRPPKEVIGFLNDIFDQFDTVIKRHDAYKVETTGETYMVASGVPNENEGRHVFEVAEMSLEIRAISLSYTLENDKNYKLRVRIGFHAGPIAAGVIGIKNPRYCLFGDTVNFASRMQSNCPPLQIQTSEITARMLLATHEYKLVKRGIVHVKGKGEVNCYWLNEHIHKDEEIEESGTISHPLES</sequence>
<gene>
    <name evidence="11" type="primary">gcy-27</name>
    <name evidence="11" type="ORF">C06A12.4</name>
</gene>